<keyword id="KW-1185">Reference proteome</keyword>
<keyword id="KW-0687">Ribonucleoprotein</keyword>
<keyword id="KW-0689">Ribosomal protein</keyword>
<feature type="chain" id="PRO_0000181071" description="Large ribosomal subunit protein bL27">
    <location>
        <begin position="1"/>
        <end position="83"/>
    </location>
</feature>
<feature type="region of interest" description="Disordered" evidence="2">
    <location>
        <begin position="1"/>
        <end position="25"/>
    </location>
</feature>
<sequence>MAHKKGQGASRNGRDSESKRLGLKVGAGQRVSTGSILVRQRGTKWHPAVNVGRGKDDTLFALVDGIVVMKKTDRTYVSVIPQA</sequence>
<protein>
    <recommendedName>
        <fullName evidence="1">Large ribosomal subunit protein bL27</fullName>
    </recommendedName>
    <alternativeName>
        <fullName evidence="3">50S ribosomal protein L27</fullName>
    </alternativeName>
</protein>
<organism>
    <name type="scientific">Chlamydia trachomatis serovar D (strain ATCC VR-885 / DSM 19411 / UW-3/Cx)</name>
    <dbReference type="NCBI Taxonomy" id="272561"/>
    <lineage>
        <taxon>Bacteria</taxon>
        <taxon>Pseudomonadati</taxon>
        <taxon>Chlamydiota</taxon>
        <taxon>Chlamydiia</taxon>
        <taxon>Chlamydiales</taxon>
        <taxon>Chlamydiaceae</taxon>
        <taxon>Chlamydia/Chlamydophila group</taxon>
        <taxon>Chlamydia</taxon>
    </lineage>
</organism>
<evidence type="ECO:0000255" key="1">
    <source>
        <dbReference type="HAMAP-Rule" id="MF_00539"/>
    </source>
</evidence>
<evidence type="ECO:0000256" key="2">
    <source>
        <dbReference type="SAM" id="MobiDB-lite"/>
    </source>
</evidence>
<evidence type="ECO:0000305" key="3"/>
<gene>
    <name evidence="1" type="primary">rpmA</name>
    <name type="synonym">rl27</name>
    <name type="ordered locus">CT_419</name>
</gene>
<name>RL27_CHLTR</name>
<accession>P66123</accession>
<accession>O84424</accession>
<accession>Q9PJX6</accession>
<proteinExistence type="inferred from homology"/>
<reference key="1">
    <citation type="journal article" date="1998" name="Science">
        <title>Genome sequence of an obligate intracellular pathogen of humans: Chlamydia trachomatis.</title>
        <authorList>
            <person name="Stephens R.S."/>
            <person name="Kalman S."/>
            <person name="Lammel C.J."/>
            <person name="Fan J."/>
            <person name="Marathe R."/>
            <person name="Aravind L."/>
            <person name="Mitchell W.P."/>
            <person name="Olinger L."/>
            <person name="Tatusov R.L."/>
            <person name="Zhao Q."/>
            <person name="Koonin E.V."/>
            <person name="Davis R.W."/>
        </authorList>
    </citation>
    <scope>NUCLEOTIDE SEQUENCE [LARGE SCALE GENOMIC DNA]</scope>
    <source>
        <strain>ATCC VR-885 / DSM 19411 / UW-3/Cx</strain>
    </source>
</reference>
<dbReference type="EMBL" id="AE001273">
    <property type="protein sequence ID" value="AAC68016.1"/>
    <property type="molecule type" value="Genomic_DNA"/>
</dbReference>
<dbReference type="PIR" id="F71517">
    <property type="entry name" value="F71517"/>
</dbReference>
<dbReference type="RefSeq" id="NP_219929.1">
    <property type="nucleotide sequence ID" value="NC_000117.1"/>
</dbReference>
<dbReference type="RefSeq" id="WP_009871771.1">
    <property type="nucleotide sequence ID" value="NC_000117.1"/>
</dbReference>
<dbReference type="SMR" id="P66123"/>
<dbReference type="FunCoup" id="P66123">
    <property type="interactions" value="241"/>
</dbReference>
<dbReference type="STRING" id="272561.CT_419"/>
<dbReference type="EnsemblBacteria" id="AAC68016">
    <property type="protein sequence ID" value="AAC68016"/>
    <property type="gene ID" value="CT_419"/>
</dbReference>
<dbReference type="GeneID" id="884696"/>
<dbReference type="GeneID" id="93065248"/>
<dbReference type="KEGG" id="ctr:CT_419"/>
<dbReference type="PATRIC" id="fig|272561.5.peg.450"/>
<dbReference type="HOGENOM" id="CLU_095424_4_0_0"/>
<dbReference type="InParanoid" id="P66123"/>
<dbReference type="OrthoDB" id="9803474at2"/>
<dbReference type="PRO" id="PR:P66123"/>
<dbReference type="Proteomes" id="UP000000431">
    <property type="component" value="Chromosome"/>
</dbReference>
<dbReference type="GO" id="GO:0022625">
    <property type="term" value="C:cytosolic large ribosomal subunit"/>
    <property type="evidence" value="ECO:0000318"/>
    <property type="project" value="GO_Central"/>
</dbReference>
<dbReference type="GO" id="GO:0003735">
    <property type="term" value="F:structural constituent of ribosome"/>
    <property type="evidence" value="ECO:0000318"/>
    <property type="project" value="GO_Central"/>
</dbReference>
<dbReference type="GO" id="GO:0006412">
    <property type="term" value="P:translation"/>
    <property type="evidence" value="ECO:0007669"/>
    <property type="project" value="UniProtKB-UniRule"/>
</dbReference>
<dbReference type="FunFam" id="2.40.50.100:FF:000020">
    <property type="entry name" value="50S ribosomal protein L27"/>
    <property type="match status" value="1"/>
</dbReference>
<dbReference type="Gene3D" id="2.40.50.100">
    <property type="match status" value="1"/>
</dbReference>
<dbReference type="HAMAP" id="MF_00539">
    <property type="entry name" value="Ribosomal_bL27"/>
    <property type="match status" value="1"/>
</dbReference>
<dbReference type="InterPro" id="IPR001684">
    <property type="entry name" value="Ribosomal_bL27"/>
</dbReference>
<dbReference type="NCBIfam" id="TIGR00062">
    <property type="entry name" value="L27"/>
    <property type="match status" value="1"/>
</dbReference>
<dbReference type="PANTHER" id="PTHR15893:SF0">
    <property type="entry name" value="LARGE RIBOSOMAL SUBUNIT PROTEIN BL27M"/>
    <property type="match status" value="1"/>
</dbReference>
<dbReference type="PANTHER" id="PTHR15893">
    <property type="entry name" value="RIBOSOMAL PROTEIN L27"/>
    <property type="match status" value="1"/>
</dbReference>
<dbReference type="Pfam" id="PF01016">
    <property type="entry name" value="Ribosomal_L27"/>
    <property type="match status" value="1"/>
</dbReference>
<dbReference type="PRINTS" id="PR00063">
    <property type="entry name" value="RIBOSOMALL27"/>
</dbReference>
<dbReference type="SUPFAM" id="SSF110324">
    <property type="entry name" value="Ribosomal L27 protein-like"/>
    <property type="match status" value="1"/>
</dbReference>
<comment type="similarity">
    <text evidence="1">Belongs to the bacterial ribosomal protein bL27 family.</text>
</comment>